<keyword id="KW-1267">Proteomics identification</keyword>
<keyword id="KW-1185">Reference proteome</keyword>
<sequence length="645" mass="73945">MGDRRPQDRPRSQGMDSKPWYCDKPPSKYFAKRKHRRLRFPPVDTQNWVFVTEGMDDFRYACQSPEDTLVCRRDEFLLPKISLRGPQADRKSRKKKLLKKAALFSELSPVQPARKAFVEEVEAQLMTKHPLAMYPNLGKDMPPDLLLQVLKQLDPERKLEDAWARCEAREKTTEVPTESGKYPCGESCPRPPETPVSRLRPQLPKTPVSSRRPEPPKTRVSSLRPEPPKTRVSSLHPEPPETRASHLRVDPPETGVSHLCPEPPKTLVSSVHPEPPDTGASHLCPEPPETRVSHLHPEPPETGVSHLRPEPSKTQVSSLCPEPPEAGVSHLCLEPPNTHRVSSFLLQVLKLDSEKKLEDARARCEGQEMTTEELTKPGKYHFWESCPRPFESRMPHLRLVLPITRRMASLCLKPPKTRRVSSLCPEPTKTGASHLKELFQEDTPSTMECVSDSLQRRHTSRKLRDFKWAGDLGVNEESISSLFDFTPECRTTDQDQKIKKANECASRLMYGMELDDMDEVEFLRIKYWDRRRRAAPHSYSAQRGRIRYGPWYFEPKLGKKLRSDEPLIDPKPVLEKPDEPDILDGLYGPIAFKDFILSKGYRMPGVIEKLFAKKGWTYDSVKTPIQRAVQVYKYKEDVTDASKED</sequence>
<accession>Q8NA70</accession>
<accession>Q5JQN5</accession>
<accession>Q6PIG3</accession>
<reference key="1">
    <citation type="journal article" date="2004" name="Nat. Genet.">
        <title>Complete sequencing and characterization of 21,243 full-length human cDNAs.</title>
        <authorList>
            <person name="Ota T."/>
            <person name="Suzuki Y."/>
            <person name="Nishikawa T."/>
            <person name="Otsuki T."/>
            <person name="Sugiyama T."/>
            <person name="Irie R."/>
            <person name="Wakamatsu A."/>
            <person name="Hayashi K."/>
            <person name="Sato H."/>
            <person name="Nagai K."/>
            <person name="Kimura K."/>
            <person name="Makita H."/>
            <person name="Sekine M."/>
            <person name="Obayashi M."/>
            <person name="Nishi T."/>
            <person name="Shibahara T."/>
            <person name="Tanaka T."/>
            <person name="Ishii S."/>
            <person name="Yamamoto J."/>
            <person name="Saito K."/>
            <person name="Kawai Y."/>
            <person name="Isono Y."/>
            <person name="Nakamura Y."/>
            <person name="Nagahari K."/>
            <person name="Murakami K."/>
            <person name="Yasuda T."/>
            <person name="Iwayanagi T."/>
            <person name="Wagatsuma M."/>
            <person name="Shiratori A."/>
            <person name="Sudo H."/>
            <person name="Hosoiri T."/>
            <person name="Kaku Y."/>
            <person name="Kodaira H."/>
            <person name="Kondo H."/>
            <person name="Sugawara M."/>
            <person name="Takahashi M."/>
            <person name="Kanda K."/>
            <person name="Yokoi T."/>
            <person name="Furuya T."/>
            <person name="Kikkawa E."/>
            <person name="Omura Y."/>
            <person name="Abe K."/>
            <person name="Kamihara K."/>
            <person name="Katsuta N."/>
            <person name="Sato K."/>
            <person name="Tanikawa M."/>
            <person name="Yamazaki M."/>
            <person name="Ninomiya K."/>
            <person name="Ishibashi T."/>
            <person name="Yamashita H."/>
            <person name="Murakawa K."/>
            <person name="Fujimori K."/>
            <person name="Tanai H."/>
            <person name="Kimata M."/>
            <person name="Watanabe M."/>
            <person name="Hiraoka S."/>
            <person name="Chiba Y."/>
            <person name="Ishida S."/>
            <person name="Ono Y."/>
            <person name="Takiguchi S."/>
            <person name="Watanabe S."/>
            <person name="Yosida M."/>
            <person name="Hotuta T."/>
            <person name="Kusano J."/>
            <person name="Kanehori K."/>
            <person name="Takahashi-Fujii A."/>
            <person name="Hara H."/>
            <person name="Tanase T.-O."/>
            <person name="Nomura Y."/>
            <person name="Togiya S."/>
            <person name="Komai F."/>
            <person name="Hara R."/>
            <person name="Takeuchi K."/>
            <person name="Arita M."/>
            <person name="Imose N."/>
            <person name="Musashino K."/>
            <person name="Yuuki H."/>
            <person name="Oshima A."/>
            <person name="Sasaki N."/>
            <person name="Aotsuka S."/>
            <person name="Yoshikawa Y."/>
            <person name="Matsunawa H."/>
            <person name="Ichihara T."/>
            <person name="Shiohata N."/>
            <person name="Sano S."/>
            <person name="Moriya S."/>
            <person name="Momiyama H."/>
            <person name="Satoh N."/>
            <person name="Takami S."/>
            <person name="Terashima Y."/>
            <person name="Suzuki O."/>
            <person name="Nakagawa S."/>
            <person name="Senoh A."/>
            <person name="Mizoguchi H."/>
            <person name="Goto Y."/>
            <person name="Shimizu F."/>
            <person name="Wakebe H."/>
            <person name="Hishigaki H."/>
            <person name="Watanabe T."/>
            <person name="Sugiyama A."/>
            <person name="Takemoto M."/>
            <person name="Kawakami B."/>
            <person name="Yamazaki M."/>
            <person name="Watanabe K."/>
            <person name="Kumagai A."/>
            <person name="Itakura S."/>
            <person name="Fukuzumi Y."/>
            <person name="Fujimori Y."/>
            <person name="Komiyama M."/>
            <person name="Tashiro H."/>
            <person name="Tanigami A."/>
            <person name="Fujiwara T."/>
            <person name="Ono T."/>
            <person name="Yamada K."/>
            <person name="Fujii Y."/>
            <person name="Ozaki K."/>
            <person name="Hirao M."/>
            <person name="Ohmori Y."/>
            <person name="Kawabata A."/>
            <person name="Hikiji T."/>
            <person name="Kobatake N."/>
            <person name="Inagaki H."/>
            <person name="Ikema Y."/>
            <person name="Okamoto S."/>
            <person name="Okitani R."/>
            <person name="Kawakami T."/>
            <person name="Noguchi S."/>
            <person name="Itoh T."/>
            <person name="Shigeta K."/>
            <person name="Senba T."/>
            <person name="Matsumura K."/>
            <person name="Nakajima Y."/>
            <person name="Mizuno T."/>
            <person name="Morinaga M."/>
            <person name="Sasaki M."/>
            <person name="Togashi T."/>
            <person name="Oyama M."/>
            <person name="Hata H."/>
            <person name="Watanabe M."/>
            <person name="Komatsu T."/>
            <person name="Mizushima-Sugano J."/>
            <person name="Satoh T."/>
            <person name="Shirai Y."/>
            <person name="Takahashi Y."/>
            <person name="Nakagawa K."/>
            <person name="Okumura K."/>
            <person name="Nagase T."/>
            <person name="Nomura N."/>
            <person name="Kikuchi H."/>
            <person name="Masuho Y."/>
            <person name="Yamashita R."/>
            <person name="Nakai K."/>
            <person name="Yada T."/>
            <person name="Nakamura Y."/>
            <person name="Ohara O."/>
            <person name="Isogai T."/>
            <person name="Sugano S."/>
        </authorList>
    </citation>
    <scope>NUCLEOTIDE SEQUENCE [LARGE SCALE MRNA]</scope>
    <source>
        <tissue>Testis</tissue>
    </source>
</reference>
<reference key="2">
    <citation type="journal article" date="2005" name="Nature">
        <title>The DNA sequence of the human X chromosome.</title>
        <authorList>
            <person name="Ross M.T."/>
            <person name="Grafham D.V."/>
            <person name="Coffey A.J."/>
            <person name="Scherer S."/>
            <person name="McLay K."/>
            <person name="Muzny D."/>
            <person name="Platzer M."/>
            <person name="Howell G.R."/>
            <person name="Burrows C."/>
            <person name="Bird C.P."/>
            <person name="Frankish A."/>
            <person name="Lovell F.L."/>
            <person name="Howe K.L."/>
            <person name="Ashurst J.L."/>
            <person name="Fulton R.S."/>
            <person name="Sudbrak R."/>
            <person name="Wen G."/>
            <person name="Jones M.C."/>
            <person name="Hurles M.E."/>
            <person name="Andrews T.D."/>
            <person name="Scott C.E."/>
            <person name="Searle S."/>
            <person name="Ramser J."/>
            <person name="Whittaker A."/>
            <person name="Deadman R."/>
            <person name="Carter N.P."/>
            <person name="Hunt S.E."/>
            <person name="Chen R."/>
            <person name="Cree A."/>
            <person name="Gunaratne P."/>
            <person name="Havlak P."/>
            <person name="Hodgson A."/>
            <person name="Metzker M.L."/>
            <person name="Richards S."/>
            <person name="Scott G."/>
            <person name="Steffen D."/>
            <person name="Sodergren E."/>
            <person name="Wheeler D.A."/>
            <person name="Worley K.C."/>
            <person name="Ainscough R."/>
            <person name="Ambrose K.D."/>
            <person name="Ansari-Lari M.A."/>
            <person name="Aradhya S."/>
            <person name="Ashwell R.I."/>
            <person name="Babbage A.K."/>
            <person name="Bagguley C.L."/>
            <person name="Ballabio A."/>
            <person name="Banerjee R."/>
            <person name="Barker G.E."/>
            <person name="Barlow K.F."/>
            <person name="Barrett I.P."/>
            <person name="Bates K.N."/>
            <person name="Beare D.M."/>
            <person name="Beasley H."/>
            <person name="Beasley O."/>
            <person name="Beck A."/>
            <person name="Bethel G."/>
            <person name="Blechschmidt K."/>
            <person name="Brady N."/>
            <person name="Bray-Allen S."/>
            <person name="Bridgeman A.M."/>
            <person name="Brown A.J."/>
            <person name="Brown M.J."/>
            <person name="Bonnin D."/>
            <person name="Bruford E.A."/>
            <person name="Buhay C."/>
            <person name="Burch P."/>
            <person name="Burford D."/>
            <person name="Burgess J."/>
            <person name="Burrill W."/>
            <person name="Burton J."/>
            <person name="Bye J.M."/>
            <person name="Carder C."/>
            <person name="Carrel L."/>
            <person name="Chako J."/>
            <person name="Chapman J.C."/>
            <person name="Chavez D."/>
            <person name="Chen E."/>
            <person name="Chen G."/>
            <person name="Chen Y."/>
            <person name="Chen Z."/>
            <person name="Chinault C."/>
            <person name="Ciccodicola A."/>
            <person name="Clark S.Y."/>
            <person name="Clarke G."/>
            <person name="Clee C.M."/>
            <person name="Clegg S."/>
            <person name="Clerc-Blankenburg K."/>
            <person name="Clifford K."/>
            <person name="Cobley V."/>
            <person name="Cole C.G."/>
            <person name="Conquer J.S."/>
            <person name="Corby N."/>
            <person name="Connor R.E."/>
            <person name="David R."/>
            <person name="Davies J."/>
            <person name="Davis C."/>
            <person name="Davis J."/>
            <person name="Delgado O."/>
            <person name="Deshazo D."/>
            <person name="Dhami P."/>
            <person name="Ding Y."/>
            <person name="Dinh H."/>
            <person name="Dodsworth S."/>
            <person name="Draper H."/>
            <person name="Dugan-Rocha S."/>
            <person name="Dunham A."/>
            <person name="Dunn M."/>
            <person name="Durbin K.J."/>
            <person name="Dutta I."/>
            <person name="Eades T."/>
            <person name="Ellwood M."/>
            <person name="Emery-Cohen A."/>
            <person name="Errington H."/>
            <person name="Evans K.L."/>
            <person name="Faulkner L."/>
            <person name="Francis F."/>
            <person name="Frankland J."/>
            <person name="Fraser A.E."/>
            <person name="Galgoczy P."/>
            <person name="Gilbert J."/>
            <person name="Gill R."/>
            <person name="Gloeckner G."/>
            <person name="Gregory S.G."/>
            <person name="Gribble S."/>
            <person name="Griffiths C."/>
            <person name="Grocock R."/>
            <person name="Gu Y."/>
            <person name="Gwilliam R."/>
            <person name="Hamilton C."/>
            <person name="Hart E.A."/>
            <person name="Hawes A."/>
            <person name="Heath P.D."/>
            <person name="Heitmann K."/>
            <person name="Hennig S."/>
            <person name="Hernandez J."/>
            <person name="Hinzmann B."/>
            <person name="Ho S."/>
            <person name="Hoffs M."/>
            <person name="Howden P.J."/>
            <person name="Huckle E.J."/>
            <person name="Hume J."/>
            <person name="Hunt P.J."/>
            <person name="Hunt A.R."/>
            <person name="Isherwood J."/>
            <person name="Jacob L."/>
            <person name="Johnson D."/>
            <person name="Jones S."/>
            <person name="de Jong P.J."/>
            <person name="Joseph S.S."/>
            <person name="Keenan S."/>
            <person name="Kelly S."/>
            <person name="Kershaw J.K."/>
            <person name="Khan Z."/>
            <person name="Kioschis P."/>
            <person name="Klages S."/>
            <person name="Knights A.J."/>
            <person name="Kosiura A."/>
            <person name="Kovar-Smith C."/>
            <person name="Laird G.K."/>
            <person name="Langford C."/>
            <person name="Lawlor S."/>
            <person name="Leversha M."/>
            <person name="Lewis L."/>
            <person name="Liu W."/>
            <person name="Lloyd C."/>
            <person name="Lloyd D.M."/>
            <person name="Loulseged H."/>
            <person name="Loveland J.E."/>
            <person name="Lovell J.D."/>
            <person name="Lozado R."/>
            <person name="Lu J."/>
            <person name="Lyne R."/>
            <person name="Ma J."/>
            <person name="Maheshwari M."/>
            <person name="Matthews L.H."/>
            <person name="McDowall J."/>
            <person name="McLaren S."/>
            <person name="McMurray A."/>
            <person name="Meidl P."/>
            <person name="Meitinger T."/>
            <person name="Milne S."/>
            <person name="Miner G."/>
            <person name="Mistry S.L."/>
            <person name="Morgan M."/>
            <person name="Morris S."/>
            <person name="Mueller I."/>
            <person name="Mullikin J.C."/>
            <person name="Nguyen N."/>
            <person name="Nordsiek G."/>
            <person name="Nyakatura G."/>
            <person name="O'dell C.N."/>
            <person name="Okwuonu G."/>
            <person name="Palmer S."/>
            <person name="Pandian R."/>
            <person name="Parker D."/>
            <person name="Parrish J."/>
            <person name="Pasternak S."/>
            <person name="Patel D."/>
            <person name="Pearce A.V."/>
            <person name="Pearson D.M."/>
            <person name="Pelan S.E."/>
            <person name="Perez L."/>
            <person name="Porter K.M."/>
            <person name="Ramsey Y."/>
            <person name="Reichwald K."/>
            <person name="Rhodes S."/>
            <person name="Ridler K.A."/>
            <person name="Schlessinger D."/>
            <person name="Schueler M.G."/>
            <person name="Sehra H.K."/>
            <person name="Shaw-Smith C."/>
            <person name="Shen H."/>
            <person name="Sheridan E.M."/>
            <person name="Shownkeen R."/>
            <person name="Skuce C.D."/>
            <person name="Smith M.L."/>
            <person name="Sotheran E.C."/>
            <person name="Steingruber H.E."/>
            <person name="Steward C.A."/>
            <person name="Storey R."/>
            <person name="Swann R.M."/>
            <person name="Swarbreck D."/>
            <person name="Tabor P.E."/>
            <person name="Taudien S."/>
            <person name="Taylor T."/>
            <person name="Teague B."/>
            <person name="Thomas K."/>
            <person name="Thorpe A."/>
            <person name="Timms K."/>
            <person name="Tracey A."/>
            <person name="Trevanion S."/>
            <person name="Tromans A.C."/>
            <person name="d'Urso M."/>
            <person name="Verduzco D."/>
            <person name="Villasana D."/>
            <person name="Waldron L."/>
            <person name="Wall M."/>
            <person name="Wang Q."/>
            <person name="Warren J."/>
            <person name="Warry G.L."/>
            <person name="Wei X."/>
            <person name="West A."/>
            <person name="Whitehead S.L."/>
            <person name="Whiteley M.N."/>
            <person name="Wilkinson J.E."/>
            <person name="Willey D.L."/>
            <person name="Williams G."/>
            <person name="Williams L."/>
            <person name="Williamson A."/>
            <person name="Williamson H."/>
            <person name="Wilming L."/>
            <person name="Woodmansey R.L."/>
            <person name="Wray P.W."/>
            <person name="Yen J."/>
            <person name="Zhang J."/>
            <person name="Zhou J."/>
            <person name="Zoghbi H."/>
            <person name="Zorilla S."/>
            <person name="Buck D."/>
            <person name="Reinhardt R."/>
            <person name="Poustka A."/>
            <person name="Rosenthal A."/>
            <person name="Lehrach H."/>
            <person name="Meindl A."/>
            <person name="Minx P.J."/>
            <person name="Hillier L.W."/>
            <person name="Willard H.F."/>
            <person name="Wilson R.K."/>
            <person name="Waterston R.H."/>
            <person name="Rice C.M."/>
            <person name="Vaudin M."/>
            <person name="Coulson A."/>
            <person name="Nelson D.L."/>
            <person name="Weinstock G."/>
            <person name="Sulston J.E."/>
            <person name="Durbin R.M."/>
            <person name="Hubbard T."/>
            <person name="Gibbs R.A."/>
            <person name="Beck S."/>
            <person name="Rogers J."/>
            <person name="Bentley D.R."/>
        </authorList>
    </citation>
    <scope>NUCLEOTIDE SEQUENCE [LARGE SCALE GENOMIC DNA]</scope>
</reference>
<reference key="3">
    <citation type="journal article" date="2004" name="Genome Res.">
        <title>The status, quality, and expansion of the NIH full-length cDNA project: the Mammalian Gene Collection (MGC).</title>
        <authorList>
            <consortium name="The MGC Project Team"/>
        </authorList>
    </citation>
    <scope>NUCLEOTIDE SEQUENCE [LARGE SCALE MRNA]</scope>
    <source>
        <tissue>Testis</tissue>
    </source>
</reference>
<proteinExistence type="evidence at protein level"/>
<feature type="chain" id="PRO_0000187038" description="Protein FAM47B">
    <location>
        <begin position="1"/>
        <end position="645"/>
    </location>
</feature>
<feature type="region of interest" description="Disordered" evidence="1">
    <location>
        <begin position="1"/>
        <end position="23"/>
    </location>
</feature>
<feature type="region of interest" description="Disordered" evidence="1">
    <location>
        <begin position="168"/>
        <end position="321"/>
    </location>
</feature>
<feature type="compositionally biased region" description="Basic and acidic residues" evidence="1">
    <location>
        <begin position="1"/>
        <end position="11"/>
    </location>
</feature>
<feature type="compositionally biased region" description="Basic and acidic residues" evidence="1">
    <location>
        <begin position="238"/>
        <end position="251"/>
    </location>
</feature>
<feature type="compositionally biased region" description="Basic and acidic residues" evidence="1">
    <location>
        <begin position="288"/>
        <end position="299"/>
    </location>
</feature>
<feature type="sequence conflict" description="In Ref. 3; AAH35026." evidence="2" ref="3">
    <original>Q</original>
    <variation>H</variation>
    <location>
        <position position="202"/>
    </location>
</feature>
<feature type="sequence conflict" description="In Ref. 1; BAC04056." evidence="2" ref="1">
    <original>VS</original>
    <variation>AP</variation>
    <location>
        <begin position="220"/>
        <end position="221"/>
    </location>
</feature>
<feature type="sequence conflict" description="In Ref. 1; BAC04056." evidence="2" ref="1">
    <original>P</original>
    <variation>S</variation>
    <location>
        <position position="299"/>
    </location>
</feature>
<gene>
    <name type="primary">FAM47B</name>
</gene>
<dbReference type="EMBL" id="AK093101">
    <property type="protein sequence ID" value="BAC04056.1"/>
    <property type="molecule type" value="mRNA"/>
</dbReference>
<dbReference type="EMBL" id="AL645585">
    <property type="status" value="NOT_ANNOTATED_CDS"/>
    <property type="molecule type" value="Genomic_DNA"/>
</dbReference>
<dbReference type="EMBL" id="BC035026">
    <property type="protein sequence ID" value="AAH35026.1"/>
    <property type="molecule type" value="mRNA"/>
</dbReference>
<dbReference type="CCDS" id="CCDS14236.1"/>
<dbReference type="RefSeq" id="NP_689844.2">
    <property type="nucleotide sequence ID" value="NM_152631.3"/>
</dbReference>
<dbReference type="BioGRID" id="127993">
    <property type="interactions" value="12"/>
</dbReference>
<dbReference type="FunCoup" id="Q8NA70">
    <property type="interactions" value="2"/>
</dbReference>
<dbReference type="IntAct" id="Q8NA70">
    <property type="interactions" value="3"/>
</dbReference>
<dbReference type="STRING" id="9606.ENSP00000328307"/>
<dbReference type="GlyGen" id="Q8NA70">
    <property type="glycosylation" value="1 site, 1 O-linked glycan (1 site)"/>
</dbReference>
<dbReference type="iPTMnet" id="Q8NA70"/>
<dbReference type="PhosphoSitePlus" id="Q8NA70"/>
<dbReference type="BioMuta" id="FAM47B"/>
<dbReference type="DMDM" id="71151884"/>
<dbReference type="MassIVE" id="Q8NA70"/>
<dbReference type="PaxDb" id="9606-ENSP00000328307"/>
<dbReference type="PeptideAtlas" id="Q8NA70"/>
<dbReference type="ProteomicsDB" id="72649"/>
<dbReference type="Antibodypedia" id="24781">
    <property type="antibodies" value="33 antibodies from 12 providers"/>
</dbReference>
<dbReference type="DNASU" id="170062"/>
<dbReference type="Ensembl" id="ENST00000329357.6">
    <property type="protein sequence ID" value="ENSP00000328307.5"/>
    <property type="gene ID" value="ENSG00000189132.6"/>
</dbReference>
<dbReference type="GeneID" id="170062"/>
<dbReference type="KEGG" id="hsa:170062"/>
<dbReference type="MANE-Select" id="ENST00000329357.6">
    <property type="protein sequence ID" value="ENSP00000328307.5"/>
    <property type="RefSeq nucleotide sequence ID" value="NM_152631.3"/>
    <property type="RefSeq protein sequence ID" value="NP_689844.2"/>
</dbReference>
<dbReference type="UCSC" id="uc004ddi.3">
    <property type="organism name" value="human"/>
</dbReference>
<dbReference type="AGR" id="HGNC:26659"/>
<dbReference type="CTD" id="170062"/>
<dbReference type="DisGeNET" id="170062"/>
<dbReference type="GeneCards" id="FAM47B"/>
<dbReference type="HGNC" id="HGNC:26659">
    <property type="gene designation" value="FAM47B"/>
</dbReference>
<dbReference type="HPA" id="ENSG00000189132">
    <property type="expression patterns" value="Tissue enriched (testis)"/>
</dbReference>
<dbReference type="neXtProt" id="NX_Q8NA70"/>
<dbReference type="OpenTargets" id="ENSG00000189132"/>
<dbReference type="PharmGKB" id="PA134969396"/>
<dbReference type="VEuPathDB" id="HostDB:ENSG00000189132"/>
<dbReference type="eggNOG" id="ENOG502SEIG">
    <property type="taxonomic scope" value="Eukaryota"/>
</dbReference>
<dbReference type="GeneTree" id="ENSGT00940000165290"/>
<dbReference type="HOGENOM" id="CLU_424481_0_0_1"/>
<dbReference type="InParanoid" id="Q8NA70"/>
<dbReference type="OMA" id="RYGPWYF"/>
<dbReference type="OrthoDB" id="6755972at2759"/>
<dbReference type="PAN-GO" id="Q8NA70">
    <property type="GO annotations" value="0 GO annotations based on evolutionary models"/>
</dbReference>
<dbReference type="PhylomeDB" id="Q8NA70"/>
<dbReference type="TreeFam" id="TF340932"/>
<dbReference type="PathwayCommons" id="Q8NA70"/>
<dbReference type="SignaLink" id="Q8NA70"/>
<dbReference type="BioGRID-ORCS" id="170062">
    <property type="hits" value="10 hits in 759 CRISPR screens"/>
</dbReference>
<dbReference type="GenomeRNAi" id="170062"/>
<dbReference type="Pharos" id="Q8NA70">
    <property type="development level" value="Tdark"/>
</dbReference>
<dbReference type="PRO" id="PR:Q8NA70"/>
<dbReference type="Proteomes" id="UP000005640">
    <property type="component" value="Chromosome X"/>
</dbReference>
<dbReference type="RNAct" id="Q8NA70">
    <property type="molecule type" value="protein"/>
</dbReference>
<dbReference type="Bgee" id="ENSG00000189132">
    <property type="expression patterns" value="Expressed in sperm and 15 other cell types or tissues"/>
</dbReference>
<dbReference type="InterPro" id="IPR032743">
    <property type="entry name" value="FAM47"/>
</dbReference>
<dbReference type="PANTHER" id="PTHR47415">
    <property type="entry name" value="PROTEIN FAM47B"/>
    <property type="match status" value="1"/>
</dbReference>
<dbReference type="PANTHER" id="PTHR47415:SF1">
    <property type="entry name" value="PROTEIN FAM47B"/>
    <property type="match status" value="1"/>
</dbReference>
<dbReference type="Pfam" id="PF14642">
    <property type="entry name" value="FAM47"/>
    <property type="match status" value="4"/>
</dbReference>
<protein>
    <recommendedName>
        <fullName>Protein FAM47B</fullName>
    </recommendedName>
</protein>
<evidence type="ECO:0000256" key="1">
    <source>
        <dbReference type="SAM" id="MobiDB-lite"/>
    </source>
</evidence>
<evidence type="ECO:0000305" key="2"/>
<name>FA47B_HUMAN</name>
<comment type="interaction">
    <interactant intactId="EBI-9247344">
        <id>Q8NA70</id>
    </interactant>
    <interactant intactId="EBI-3866279">
        <id>Q9BWT7</id>
        <label>CARD10</label>
    </interactant>
    <organismsDiffer>false</organismsDiffer>
    <experiments>3</experiments>
</comment>
<comment type="interaction">
    <interactant intactId="EBI-9247344">
        <id>Q8NA70</id>
    </interactant>
    <interactant intactId="EBI-11977221">
        <id>Q86Z20</id>
        <label>CCDC125</label>
    </interactant>
    <organismsDiffer>false</organismsDiffer>
    <experiments>3</experiments>
</comment>
<comment type="similarity">
    <text evidence="2">Belongs to the FAM47 family.</text>
</comment>
<organism>
    <name type="scientific">Homo sapiens</name>
    <name type="common">Human</name>
    <dbReference type="NCBI Taxonomy" id="9606"/>
    <lineage>
        <taxon>Eukaryota</taxon>
        <taxon>Metazoa</taxon>
        <taxon>Chordata</taxon>
        <taxon>Craniata</taxon>
        <taxon>Vertebrata</taxon>
        <taxon>Euteleostomi</taxon>
        <taxon>Mammalia</taxon>
        <taxon>Eutheria</taxon>
        <taxon>Euarchontoglires</taxon>
        <taxon>Primates</taxon>
        <taxon>Haplorrhini</taxon>
        <taxon>Catarrhini</taxon>
        <taxon>Hominidae</taxon>
        <taxon>Homo</taxon>
    </lineage>
</organism>